<protein>
    <recommendedName>
        <fullName evidence="1">Protein PsbN</fullName>
    </recommendedName>
</protein>
<dbReference type="EMBL" id="AP006714">
    <property type="protein sequence ID" value="BAD27320.1"/>
    <property type="molecule type" value="Genomic_DNA"/>
</dbReference>
<dbReference type="RefSeq" id="YP_009389598.1">
    <property type="nucleotide sequence ID" value="NC_035224.1"/>
</dbReference>
<dbReference type="SMR" id="Q6ENT6"/>
<dbReference type="GeneID" id="33347822"/>
<dbReference type="GO" id="GO:0009535">
    <property type="term" value="C:chloroplast thylakoid membrane"/>
    <property type="evidence" value="ECO:0007669"/>
    <property type="project" value="UniProtKB-SubCell"/>
</dbReference>
<dbReference type="GO" id="GO:0015979">
    <property type="term" value="P:photosynthesis"/>
    <property type="evidence" value="ECO:0007669"/>
    <property type="project" value="InterPro"/>
</dbReference>
<dbReference type="HAMAP" id="MF_00293">
    <property type="entry name" value="PSII_PsbN"/>
    <property type="match status" value="1"/>
</dbReference>
<dbReference type="InterPro" id="IPR003398">
    <property type="entry name" value="PSII_PsbN"/>
</dbReference>
<dbReference type="PANTHER" id="PTHR35326">
    <property type="entry name" value="PROTEIN PSBN"/>
    <property type="match status" value="1"/>
</dbReference>
<dbReference type="PANTHER" id="PTHR35326:SF3">
    <property type="entry name" value="PROTEIN PSBN"/>
    <property type="match status" value="1"/>
</dbReference>
<dbReference type="Pfam" id="PF02468">
    <property type="entry name" value="PsbN"/>
    <property type="match status" value="1"/>
</dbReference>
<proteinExistence type="inferred from homology"/>
<feature type="chain" id="PRO_0000207947" description="Protein PsbN">
    <location>
        <begin position="1"/>
        <end position="43"/>
    </location>
</feature>
<feature type="transmembrane region" description="Helical" evidence="1">
    <location>
        <begin position="5"/>
        <end position="27"/>
    </location>
</feature>
<geneLocation type="chloroplast"/>
<comment type="function">
    <text evidence="1">May play a role in photosystem I and II biogenesis.</text>
</comment>
<comment type="subcellular location">
    <subcellularLocation>
        <location evidence="1">Plastid</location>
        <location evidence="1">Chloroplast thylakoid membrane</location>
        <topology evidence="1">Single-pass membrane protein</topology>
    </subcellularLocation>
</comment>
<comment type="similarity">
    <text evidence="1">Belongs to the PsbN family.</text>
</comment>
<comment type="caution">
    <text evidence="1">Originally thought to be a component of PSII; based on experiments in Synechocystis, N.tabacum and barley, and its absence from PSII in T.elongatus and T.vulcanus, this is probably not true.</text>
</comment>
<keyword id="KW-0150">Chloroplast</keyword>
<keyword id="KW-0472">Membrane</keyword>
<keyword id="KW-0934">Plastid</keyword>
<keyword id="KW-0793">Thylakoid</keyword>
<keyword id="KW-0812">Transmembrane</keyword>
<keyword id="KW-1133">Transmembrane helix</keyword>
<evidence type="ECO:0000255" key="1">
    <source>
        <dbReference type="HAMAP-Rule" id="MF_00293"/>
    </source>
</evidence>
<accession>Q6ENT6</accession>
<organism>
    <name type="scientific">Saccharum officinarum</name>
    <name type="common">Sugarcane</name>
    <dbReference type="NCBI Taxonomy" id="4547"/>
    <lineage>
        <taxon>Eukaryota</taxon>
        <taxon>Viridiplantae</taxon>
        <taxon>Streptophyta</taxon>
        <taxon>Embryophyta</taxon>
        <taxon>Tracheophyta</taxon>
        <taxon>Spermatophyta</taxon>
        <taxon>Magnoliopsida</taxon>
        <taxon>Liliopsida</taxon>
        <taxon>Poales</taxon>
        <taxon>Poaceae</taxon>
        <taxon>PACMAD clade</taxon>
        <taxon>Panicoideae</taxon>
        <taxon>Andropogonodae</taxon>
        <taxon>Andropogoneae</taxon>
        <taxon>Saccharinae</taxon>
        <taxon>Saccharum</taxon>
        <taxon>Saccharum officinarum species complex</taxon>
    </lineage>
</organism>
<reference key="1">
    <citation type="journal article" date="2004" name="DNA Res.">
        <title>Complete nucleotide sequence of the sugarcane (Saccharum officinarum) chloroplast genome: a comparative analysis of four monocot chloroplast genomes.</title>
        <authorList>
            <person name="Asano T."/>
            <person name="Tsudzuki T."/>
            <person name="Takahashi S."/>
            <person name="Shimada H."/>
            <person name="Kadowaki K."/>
        </authorList>
    </citation>
    <scope>NUCLEOTIDE SEQUENCE [LARGE SCALE GENOMIC DNA]</scope>
</reference>
<sequence>METATLVAISISGLLVSFTGYALYTAFGQPSQQLRDPFEEHGD</sequence>
<name>PSBN_SACOF</name>
<gene>
    <name evidence="1" type="primary">psbN</name>
</gene>